<accession>P60236</accession>
<evidence type="ECO:0000250" key="1">
    <source>
        <dbReference type="UniProtKB" id="P60301"/>
    </source>
</evidence>
<evidence type="ECO:0000269" key="2">
    <source>
    </source>
</evidence>
<evidence type="ECO:0000305" key="3"/>
<dbReference type="SMR" id="P60236"/>
<dbReference type="GO" id="GO:0005576">
    <property type="term" value="C:extracellular region"/>
    <property type="evidence" value="ECO:0007669"/>
    <property type="project" value="UniProtKB-SubCell"/>
</dbReference>
<dbReference type="GO" id="GO:0090729">
    <property type="term" value="F:toxin activity"/>
    <property type="evidence" value="ECO:0007669"/>
    <property type="project" value="UniProtKB-KW"/>
</dbReference>
<dbReference type="CDD" id="cd00206">
    <property type="entry name" value="TFP_snake_toxin"/>
    <property type="match status" value="1"/>
</dbReference>
<dbReference type="Gene3D" id="2.10.60.10">
    <property type="entry name" value="CD59"/>
    <property type="match status" value="1"/>
</dbReference>
<dbReference type="InterPro" id="IPR003571">
    <property type="entry name" value="Snake_3FTx"/>
</dbReference>
<dbReference type="InterPro" id="IPR045860">
    <property type="entry name" value="Snake_toxin-like_sf"/>
</dbReference>
<dbReference type="InterPro" id="IPR054131">
    <property type="entry name" value="Toxin_cobra-type"/>
</dbReference>
<dbReference type="Pfam" id="PF21947">
    <property type="entry name" value="Toxin_cobra-type"/>
    <property type="match status" value="1"/>
</dbReference>
<dbReference type="SUPFAM" id="SSF57302">
    <property type="entry name" value="Snake toxin-like"/>
    <property type="match status" value="1"/>
</dbReference>
<protein>
    <recommendedName>
        <fullName>Muscarinic m1-toxin4</fullName>
    </recommendedName>
</protein>
<reference key="1">
    <citation type="journal article" date="2000" name="Toxicon">
        <title>M1-toxin isotoxins from the green mamba (Dendroaspis angusticeps) that selectively block m1 muscarinic receptors.</title>
        <authorList>
            <person name="Carsi J.M."/>
            <person name="Potter L.T."/>
        </authorList>
    </citation>
    <scope>PROTEIN SEQUENCE</scope>
    <scope>FUNCTION</scope>
    <scope>SUBCELLULAR LOCATION</scope>
    <source>
        <tissue>Venom</tissue>
    </source>
</reference>
<keyword id="KW-0903">Direct protein sequencing</keyword>
<keyword id="KW-1015">Disulfide bond</keyword>
<keyword id="KW-1214">G-protein coupled acetylcholine receptor impairing toxin</keyword>
<keyword id="KW-1213">G-protein coupled receptor impairing toxin</keyword>
<keyword id="KW-0528">Neurotoxin</keyword>
<keyword id="KW-0629">Postsynaptic neurotoxin</keyword>
<keyword id="KW-0964">Secreted</keyword>
<keyword id="KW-0800">Toxin</keyword>
<feature type="chain" id="PRO_0000093646" description="Muscarinic m1-toxin4" evidence="2">
    <location>
        <begin position="1"/>
        <end position="40" status="greater than"/>
    </location>
</feature>
<feature type="disulfide bond" evidence="1">
    <location>
        <begin position="3"/>
        <end position="24"/>
    </location>
</feature>
<feature type="non-terminal residue">
    <location>
        <position position="40"/>
    </location>
</feature>
<name>3SI14_DENAN</name>
<comment type="function">
    <text evidence="2">Binds irreversibly and specifically to M1 (CHRM1) muscarinic acetylcholine receptors, blocking further binding of antagonists and preventing the action of agonists.</text>
</comment>
<comment type="subunit">
    <text>Monomer.</text>
</comment>
<comment type="subcellular location">
    <subcellularLocation>
        <location evidence="2">Secreted</location>
    </subcellularLocation>
</comment>
<comment type="tissue specificity">
    <text evidence="3">Expressed by the venom gland.</text>
</comment>
<comment type="PTM">
    <text evidence="1">Contains 4 disulfide bonds.</text>
</comment>
<comment type="miscellaneous">
    <text evidence="3">Is classified as a P-type cytotoxin, since a proline residue stands at position 33 (Pro-31 in standard classification).</text>
</comment>
<comment type="similarity">
    <text evidence="3">Belongs to the three-finger toxin family. Short-chain subfamily. Aminergic toxin sub-subfamily.</text>
</comment>
<proteinExistence type="evidence at protein level"/>
<organism>
    <name type="scientific">Dendroaspis angusticeps</name>
    <name type="common">Eastern green mamba</name>
    <name type="synonym">Naja angusticeps</name>
    <dbReference type="NCBI Taxonomy" id="8618"/>
    <lineage>
        <taxon>Eukaryota</taxon>
        <taxon>Metazoa</taxon>
        <taxon>Chordata</taxon>
        <taxon>Craniata</taxon>
        <taxon>Vertebrata</taxon>
        <taxon>Euteleostomi</taxon>
        <taxon>Lepidosauria</taxon>
        <taxon>Squamata</taxon>
        <taxon>Bifurcata</taxon>
        <taxon>Unidentata</taxon>
        <taxon>Episquamata</taxon>
        <taxon>Toxicofera</taxon>
        <taxon>Serpentes</taxon>
        <taxon>Colubroidea</taxon>
        <taxon>Elapidae</taxon>
        <taxon>Elapinae</taxon>
        <taxon>Dendroaspis</taxon>
    </lineage>
</organism>
<sequence>LTCVKSNSIWFITSENCPAGQNLCFKRWQYISPRMYDFTR</sequence>